<feature type="chain" id="PRO_0000427587" description="Uncharacterized protein MT0497">
    <location>
        <begin position="1"/>
        <end position="348"/>
    </location>
</feature>
<feature type="transmembrane region" description="Helical" evidence="1">
    <location>
        <begin position="111"/>
        <end position="131"/>
    </location>
</feature>
<feature type="transmembrane region" description="Helical" evidence="1">
    <location>
        <begin position="235"/>
        <end position="255"/>
    </location>
</feature>
<feature type="region of interest" description="Disordered" evidence="2">
    <location>
        <begin position="1"/>
        <end position="83"/>
    </location>
</feature>
<feature type="compositionally biased region" description="Pro residues" evidence="2">
    <location>
        <begin position="1"/>
        <end position="11"/>
    </location>
</feature>
<evidence type="ECO:0000255" key="1"/>
<evidence type="ECO:0000256" key="2">
    <source>
        <dbReference type="SAM" id="MobiDB-lite"/>
    </source>
</evidence>
<evidence type="ECO:0000305" key="3"/>
<gene>
    <name type="ordered locus">MT0497</name>
</gene>
<keyword id="KW-1003">Cell membrane</keyword>
<keyword id="KW-0472">Membrane</keyword>
<keyword id="KW-1185">Reference proteome</keyword>
<keyword id="KW-0812">Transmembrane</keyword>
<keyword id="KW-1133">Transmembrane helix</keyword>
<name>Y479_MYCTO</name>
<sequence>MTNPQGPPNDPSPWARPGDQGPLARPPASSEASTGRLRPGEPAGHIQEPVSPPTQPEQQPQTEHLAASHAHTRRSGRQAAHQAWDPTGLLAAQEEEPAAVKTKRRARRDPLTVFLVLIIVFSLVLAGLIGGELYARHVANSKVAQAVACVVKDQATASFGVAPLLLWQVATRHFTNISVETAGNQIRDAKGMQIKLTIQNVRLKNTPNSRGTIGALDATITWSSEGIKESVQNAIPILGAFVTSSVVTHPADGTVELKGLLNNITAKPIVAGKGLELQIINFNTLGFSLPKETVQSTLNEFTSSLTKNYPLGIHADSVQVTSTGVVSRFSTRDAAIPTGIQNPCFSHI</sequence>
<dbReference type="EMBL" id="AE000516">
    <property type="protein sequence ID" value="AAK44720.1"/>
    <property type="molecule type" value="Genomic_DNA"/>
</dbReference>
<dbReference type="PIR" id="B70743">
    <property type="entry name" value="B70743"/>
</dbReference>
<dbReference type="RefSeq" id="WP_003898475.1">
    <property type="nucleotide sequence ID" value="NZ_KK341227.1"/>
</dbReference>
<dbReference type="SMR" id="P9WKV6"/>
<dbReference type="KEGG" id="mtc:MT0497"/>
<dbReference type="PATRIC" id="fig|83331.31.peg.526"/>
<dbReference type="HOGENOM" id="CLU_067536_0_0_11"/>
<dbReference type="Proteomes" id="UP000001020">
    <property type="component" value="Chromosome"/>
</dbReference>
<dbReference type="GO" id="GO:0005886">
    <property type="term" value="C:plasma membrane"/>
    <property type="evidence" value="ECO:0007669"/>
    <property type="project" value="UniProtKB-SubCell"/>
</dbReference>
<dbReference type="InterPro" id="IPR021373">
    <property type="entry name" value="DUF2993"/>
</dbReference>
<dbReference type="Pfam" id="PF11209">
    <property type="entry name" value="LmeA"/>
    <property type="match status" value="1"/>
</dbReference>
<comment type="subcellular location">
    <subcellularLocation>
        <location evidence="3">Cell membrane</location>
        <topology evidence="3">Multi-pass membrane protein</topology>
    </subcellularLocation>
</comment>
<organism>
    <name type="scientific">Mycobacterium tuberculosis (strain CDC 1551 / Oshkosh)</name>
    <dbReference type="NCBI Taxonomy" id="83331"/>
    <lineage>
        <taxon>Bacteria</taxon>
        <taxon>Bacillati</taxon>
        <taxon>Actinomycetota</taxon>
        <taxon>Actinomycetes</taxon>
        <taxon>Mycobacteriales</taxon>
        <taxon>Mycobacteriaceae</taxon>
        <taxon>Mycobacterium</taxon>
        <taxon>Mycobacterium tuberculosis complex</taxon>
    </lineage>
</organism>
<accession>P9WKV6</accession>
<accession>L0T6L4</accession>
<accession>P64699</accession>
<accession>Q11145</accession>
<protein>
    <recommendedName>
        <fullName>Uncharacterized protein MT0497</fullName>
    </recommendedName>
</protein>
<proteinExistence type="predicted"/>
<reference key="1">
    <citation type="journal article" date="2002" name="J. Bacteriol.">
        <title>Whole-genome comparison of Mycobacterium tuberculosis clinical and laboratory strains.</title>
        <authorList>
            <person name="Fleischmann R.D."/>
            <person name="Alland D."/>
            <person name="Eisen J.A."/>
            <person name="Carpenter L."/>
            <person name="White O."/>
            <person name="Peterson J.D."/>
            <person name="DeBoy R.T."/>
            <person name="Dodson R.J."/>
            <person name="Gwinn M.L."/>
            <person name="Haft D.H."/>
            <person name="Hickey E.K."/>
            <person name="Kolonay J.F."/>
            <person name="Nelson W.C."/>
            <person name="Umayam L.A."/>
            <person name="Ermolaeva M.D."/>
            <person name="Salzberg S.L."/>
            <person name="Delcher A."/>
            <person name="Utterback T.R."/>
            <person name="Weidman J.F."/>
            <person name="Khouri H.M."/>
            <person name="Gill J."/>
            <person name="Mikula A."/>
            <person name="Bishai W."/>
            <person name="Jacobs W.R. Jr."/>
            <person name="Venter J.C."/>
            <person name="Fraser C.M."/>
        </authorList>
    </citation>
    <scope>NUCLEOTIDE SEQUENCE [LARGE SCALE GENOMIC DNA]</scope>
    <source>
        <strain>CDC 1551 / Oshkosh</strain>
    </source>
</reference>